<protein>
    <recommendedName>
        <fullName>NADH-ubiquinone oxidoreductase chain 3</fullName>
        <ecNumber>7.1.1.2</ecNumber>
    </recommendedName>
    <alternativeName>
        <fullName>NADH dehydrogenase subunit 3</fullName>
    </alternativeName>
</protein>
<gene>
    <name type="primary">MT-ND3</name>
    <name type="synonym">MTND3</name>
    <name type="synonym">NADH3</name>
    <name type="synonym">ND3</name>
</gene>
<proteinExistence type="inferred from homology"/>
<sequence length="116" mass="12940">MNLVISILAITIILSSILAVVSFWLPQMNPDAEKLSPYECGFDPLGSARLPFSIRFFLVAILFLLFDLEIALLLALPWGDQLYSATGTFFWATAVLILLTLGLIYEWTQGGLEWAE</sequence>
<evidence type="ECO:0000250" key="1"/>
<evidence type="ECO:0000255" key="2"/>
<evidence type="ECO:0000305" key="3"/>
<name>NU3M_FORLA</name>
<accession>P34192</accession>
<dbReference type="EC" id="7.1.1.2"/>
<dbReference type="EMBL" id="M91245">
    <property type="protein sequence ID" value="AAB96818.1"/>
    <property type="molecule type" value="Genomic_DNA"/>
</dbReference>
<dbReference type="PIR" id="S35468">
    <property type="entry name" value="S35468"/>
</dbReference>
<dbReference type="RefSeq" id="NP_008310.1">
    <property type="nucleotide sequence ID" value="NC_001727.1"/>
</dbReference>
<dbReference type="SMR" id="P34192"/>
<dbReference type="GeneID" id="807995"/>
<dbReference type="CTD" id="4537"/>
<dbReference type="GO" id="GO:0031966">
    <property type="term" value="C:mitochondrial membrane"/>
    <property type="evidence" value="ECO:0007669"/>
    <property type="project" value="UniProtKB-SubCell"/>
</dbReference>
<dbReference type="GO" id="GO:0030964">
    <property type="term" value="C:NADH dehydrogenase complex"/>
    <property type="evidence" value="ECO:0007669"/>
    <property type="project" value="TreeGrafter"/>
</dbReference>
<dbReference type="GO" id="GO:0008137">
    <property type="term" value="F:NADH dehydrogenase (ubiquinone) activity"/>
    <property type="evidence" value="ECO:0007669"/>
    <property type="project" value="UniProtKB-EC"/>
</dbReference>
<dbReference type="FunFam" id="1.20.58.1610:FF:000004">
    <property type="entry name" value="NADH-quinone oxidoreductase subunit A"/>
    <property type="match status" value="1"/>
</dbReference>
<dbReference type="Gene3D" id="1.20.58.1610">
    <property type="entry name" value="NADH:ubiquinone/plastoquinone oxidoreductase, chain 3"/>
    <property type="match status" value="1"/>
</dbReference>
<dbReference type="InterPro" id="IPR000440">
    <property type="entry name" value="NADH_UbQ/plastoQ_OxRdtase_su3"/>
</dbReference>
<dbReference type="InterPro" id="IPR038430">
    <property type="entry name" value="NDAH_ubi_oxred_su3_sf"/>
</dbReference>
<dbReference type="PANTHER" id="PTHR11058">
    <property type="entry name" value="NADH-UBIQUINONE OXIDOREDUCTASE CHAIN 3"/>
    <property type="match status" value="1"/>
</dbReference>
<dbReference type="PANTHER" id="PTHR11058:SF9">
    <property type="entry name" value="NADH-UBIQUINONE OXIDOREDUCTASE CHAIN 3"/>
    <property type="match status" value="1"/>
</dbReference>
<dbReference type="Pfam" id="PF00507">
    <property type="entry name" value="Oxidored_q4"/>
    <property type="match status" value="1"/>
</dbReference>
<organism>
    <name type="scientific">Formosania lacustris</name>
    <name type="common">Oriental stream loach</name>
    <name type="synonym">Crossostoma lacustre</name>
    <dbReference type="NCBI Taxonomy" id="7980"/>
    <lineage>
        <taxon>Eukaryota</taxon>
        <taxon>Metazoa</taxon>
        <taxon>Chordata</taxon>
        <taxon>Craniata</taxon>
        <taxon>Vertebrata</taxon>
        <taxon>Euteleostomi</taxon>
        <taxon>Actinopterygii</taxon>
        <taxon>Neopterygii</taxon>
        <taxon>Teleostei</taxon>
        <taxon>Ostariophysi</taxon>
        <taxon>Cypriniformes</taxon>
        <taxon>Gastromyzontidae</taxon>
        <taxon>Formosania</taxon>
    </lineage>
</organism>
<keyword id="KW-0249">Electron transport</keyword>
<keyword id="KW-0472">Membrane</keyword>
<keyword id="KW-0496">Mitochondrion</keyword>
<keyword id="KW-0520">NAD</keyword>
<keyword id="KW-0679">Respiratory chain</keyword>
<keyword id="KW-1278">Translocase</keyword>
<keyword id="KW-0812">Transmembrane</keyword>
<keyword id="KW-1133">Transmembrane helix</keyword>
<keyword id="KW-0813">Transport</keyword>
<keyword id="KW-0830">Ubiquinone</keyword>
<comment type="function">
    <text evidence="1">Core subunit of the mitochondrial membrane respiratory chain NADH dehydrogenase (Complex I) that is believed to belong to the minimal assembly required for catalysis. Complex I functions in the transfer of electrons from NADH to the respiratory chain. The immediate electron acceptor for the enzyme is believed to be ubiquinone (By similarity).</text>
</comment>
<comment type="catalytic activity">
    <reaction>
        <text>a ubiquinone + NADH + 5 H(+)(in) = a ubiquinol + NAD(+) + 4 H(+)(out)</text>
        <dbReference type="Rhea" id="RHEA:29091"/>
        <dbReference type="Rhea" id="RHEA-COMP:9565"/>
        <dbReference type="Rhea" id="RHEA-COMP:9566"/>
        <dbReference type="ChEBI" id="CHEBI:15378"/>
        <dbReference type="ChEBI" id="CHEBI:16389"/>
        <dbReference type="ChEBI" id="CHEBI:17976"/>
        <dbReference type="ChEBI" id="CHEBI:57540"/>
        <dbReference type="ChEBI" id="CHEBI:57945"/>
        <dbReference type="EC" id="7.1.1.2"/>
    </reaction>
</comment>
<comment type="subcellular location">
    <subcellularLocation>
        <location evidence="1">Mitochondrion membrane</location>
        <topology evidence="1">Multi-pass membrane protein</topology>
    </subcellularLocation>
</comment>
<comment type="similarity">
    <text evidence="3">Belongs to the complex I subunit 3 family.</text>
</comment>
<feature type="chain" id="PRO_0000117729" description="NADH-ubiquinone oxidoreductase chain 3">
    <location>
        <begin position="1"/>
        <end position="116"/>
    </location>
</feature>
<feature type="transmembrane region" description="Helical" evidence="2">
    <location>
        <begin position="3"/>
        <end position="23"/>
    </location>
</feature>
<feature type="transmembrane region" description="Helical" evidence="2">
    <location>
        <begin position="56"/>
        <end position="76"/>
    </location>
</feature>
<feature type="transmembrane region" description="Helical" evidence="2">
    <location>
        <begin position="85"/>
        <end position="105"/>
    </location>
</feature>
<geneLocation type="mitochondrion"/>
<reference key="1">
    <citation type="journal article" date="1992" name="Nucleic Acids Res.">
        <title>The complete nucleotide sequence of the Crossostoma lacustre mitochondrial genome: conservation and variations among vertebrates.</title>
        <authorList>
            <person name="Tzeng C.-S."/>
            <person name="Hui C.-F."/>
            <person name="Shen S.-C."/>
            <person name="Huang P.C."/>
        </authorList>
    </citation>
    <scope>NUCLEOTIDE SEQUENCE [GENOMIC DNA]</scope>
</reference>